<feature type="chain" id="PRO_1000004369" description="UDP-N-acetylmuramate--L-alanine ligase">
    <location>
        <begin position="1"/>
        <end position="469"/>
    </location>
</feature>
<feature type="binding site" evidence="1">
    <location>
        <begin position="112"/>
        <end position="118"/>
    </location>
    <ligand>
        <name>ATP</name>
        <dbReference type="ChEBI" id="CHEBI:30616"/>
    </ligand>
</feature>
<comment type="function">
    <text evidence="1">Cell wall formation.</text>
</comment>
<comment type="catalytic activity">
    <reaction evidence="1">
        <text>UDP-N-acetyl-alpha-D-muramate + L-alanine + ATP = UDP-N-acetyl-alpha-D-muramoyl-L-alanine + ADP + phosphate + H(+)</text>
        <dbReference type="Rhea" id="RHEA:23372"/>
        <dbReference type="ChEBI" id="CHEBI:15378"/>
        <dbReference type="ChEBI" id="CHEBI:30616"/>
        <dbReference type="ChEBI" id="CHEBI:43474"/>
        <dbReference type="ChEBI" id="CHEBI:57972"/>
        <dbReference type="ChEBI" id="CHEBI:70757"/>
        <dbReference type="ChEBI" id="CHEBI:83898"/>
        <dbReference type="ChEBI" id="CHEBI:456216"/>
        <dbReference type="EC" id="6.3.2.8"/>
    </reaction>
</comment>
<comment type="pathway">
    <text evidence="1">Cell wall biogenesis; peptidoglycan biosynthesis.</text>
</comment>
<comment type="subcellular location">
    <subcellularLocation>
        <location evidence="1">Cytoplasm</location>
    </subcellularLocation>
</comment>
<comment type="similarity">
    <text evidence="1">Belongs to the MurCDEF family.</text>
</comment>
<name>MURC_METPP</name>
<dbReference type="EC" id="6.3.2.8" evidence="1"/>
<dbReference type="EMBL" id="CP000555">
    <property type="protein sequence ID" value="ABM93425.1"/>
    <property type="molecule type" value="Genomic_DNA"/>
</dbReference>
<dbReference type="RefSeq" id="WP_011828063.1">
    <property type="nucleotide sequence ID" value="NC_008825.1"/>
</dbReference>
<dbReference type="SMR" id="A2SCY6"/>
<dbReference type="STRING" id="420662.Mpe_A0463"/>
<dbReference type="KEGG" id="mpt:Mpe_A0463"/>
<dbReference type="eggNOG" id="COG0773">
    <property type="taxonomic scope" value="Bacteria"/>
</dbReference>
<dbReference type="HOGENOM" id="CLU_028104_2_2_4"/>
<dbReference type="UniPathway" id="UPA00219"/>
<dbReference type="Proteomes" id="UP000000366">
    <property type="component" value="Chromosome"/>
</dbReference>
<dbReference type="GO" id="GO:0005737">
    <property type="term" value="C:cytoplasm"/>
    <property type="evidence" value="ECO:0007669"/>
    <property type="project" value="UniProtKB-SubCell"/>
</dbReference>
<dbReference type="GO" id="GO:0005524">
    <property type="term" value="F:ATP binding"/>
    <property type="evidence" value="ECO:0007669"/>
    <property type="project" value="UniProtKB-UniRule"/>
</dbReference>
<dbReference type="GO" id="GO:0008763">
    <property type="term" value="F:UDP-N-acetylmuramate-L-alanine ligase activity"/>
    <property type="evidence" value="ECO:0007669"/>
    <property type="project" value="UniProtKB-UniRule"/>
</dbReference>
<dbReference type="GO" id="GO:0051301">
    <property type="term" value="P:cell division"/>
    <property type="evidence" value="ECO:0007669"/>
    <property type="project" value="UniProtKB-KW"/>
</dbReference>
<dbReference type="GO" id="GO:0071555">
    <property type="term" value="P:cell wall organization"/>
    <property type="evidence" value="ECO:0007669"/>
    <property type="project" value="UniProtKB-KW"/>
</dbReference>
<dbReference type="GO" id="GO:0009252">
    <property type="term" value="P:peptidoglycan biosynthetic process"/>
    <property type="evidence" value="ECO:0007669"/>
    <property type="project" value="UniProtKB-UniRule"/>
</dbReference>
<dbReference type="GO" id="GO:0008360">
    <property type="term" value="P:regulation of cell shape"/>
    <property type="evidence" value="ECO:0007669"/>
    <property type="project" value="UniProtKB-KW"/>
</dbReference>
<dbReference type="Gene3D" id="3.90.190.20">
    <property type="entry name" value="Mur ligase, C-terminal domain"/>
    <property type="match status" value="1"/>
</dbReference>
<dbReference type="Gene3D" id="3.40.1190.10">
    <property type="entry name" value="Mur-like, catalytic domain"/>
    <property type="match status" value="1"/>
</dbReference>
<dbReference type="Gene3D" id="3.40.50.720">
    <property type="entry name" value="NAD(P)-binding Rossmann-like Domain"/>
    <property type="match status" value="1"/>
</dbReference>
<dbReference type="HAMAP" id="MF_00046">
    <property type="entry name" value="MurC"/>
    <property type="match status" value="1"/>
</dbReference>
<dbReference type="InterPro" id="IPR036565">
    <property type="entry name" value="Mur-like_cat_sf"/>
</dbReference>
<dbReference type="InterPro" id="IPR004101">
    <property type="entry name" value="Mur_ligase_C"/>
</dbReference>
<dbReference type="InterPro" id="IPR036615">
    <property type="entry name" value="Mur_ligase_C_dom_sf"/>
</dbReference>
<dbReference type="InterPro" id="IPR013221">
    <property type="entry name" value="Mur_ligase_cen"/>
</dbReference>
<dbReference type="InterPro" id="IPR000713">
    <property type="entry name" value="Mur_ligase_N"/>
</dbReference>
<dbReference type="InterPro" id="IPR050061">
    <property type="entry name" value="MurCDEF_pg_biosynth"/>
</dbReference>
<dbReference type="InterPro" id="IPR005758">
    <property type="entry name" value="UDP-N-AcMur_Ala_ligase_MurC"/>
</dbReference>
<dbReference type="NCBIfam" id="TIGR01082">
    <property type="entry name" value="murC"/>
    <property type="match status" value="1"/>
</dbReference>
<dbReference type="PANTHER" id="PTHR43445:SF3">
    <property type="entry name" value="UDP-N-ACETYLMURAMATE--L-ALANINE LIGASE"/>
    <property type="match status" value="1"/>
</dbReference>
<dbReference type="PANTHER" id="PTHR43445">
    <property type="entry name" value="UDP-N-ACETYLMURAMATE--L-ALANINE LIGASE-RELATED"/>
    <property type="match status" value="1"/>
</dbReference>
<dbReference type="Pfam" id="PF01225">
    <property type="entry name" value="Mur_ligase"/>
    <property type="match status" value="1"/>
</dbReference>
<dbReference type="Pfam" id="PF02875">
    <property type="entry name" value="Mur_ligase_C"/>
    <property type="match status" value="1"/>
</dbReference>
<dbReference type="Pfam" id="PF08245">
    <property type="entry name" value="Mur_ligase_M"/>
    <property type="match status" value="1"/>
</dbReference>
<dbReference type="SUPFAM" id="SSF51984">
    <property type="entry name" value="MurCD N-terminal domain"/>
    <property type="match status" value="1"/>
</dbReference>
<dbReference type="SUPFAM" id="SSF53623">
    <property type="entry name" value="MurD-like peptide ligases, catalytic domain"/>
    <property type="match status" value="1"/>
</dbReference>
<dbReference type="SUPFAM" id="SSF53244">
    <property type="entry name" value="MurD-like peptide ligases, peptide-binding domain"/>
    <property type="match status" value="1"/>
</dbReference>
<evidence type="ECO:0000255" key="1">
    <source>
        <dbReference type="HAMAP-Rule" id="MF_00046"/>
    </source>
</evidence>
<gene>
    <name evidence="1" type="primary">murC</name>
    <name type="ordered locus">Mpe_A0463</name>
</gene>
<keyword id="KW-0067">ATP-binding</keyword>
<keyword id="KW-0131">Cell cycle</keyword>
<keyword id="KW-0132">Cell division</keyword>
<keyword id="KW-0133">Cell shape</keyword>
<keyword id="KW-0961">Cell wall biogenesis/degradation</keyword>
<keyword id="KW-0963">Cytoplasm</keyword>
<keyword id="KW-0436">Ligase</keyword>
<keyword id="KW-0547">Nucleotide-binding</keyword>
<keyword id="KW-0573">Peptidoglycan synthesis</keyword>
<keyword id="KW-1185">Reference proteome</keyword>
<accession>A2SCY6</accession>
<proteinExistence type="inferred from homology"/>
<protein>
    <recommendedName>
        <fullName evidence="1">UDP-N-acetylmuramate--L-alanine ligase</fullName>
        <ecNumber evidence="1">6.3.2.8</ecNumber>
    </recommendedName>
    <alternativeName>
        <fullName evidence="1">UDP-N-acetylmuramoyl-L-alanine synthetase</fullName>
    </alternativeName>
</protein>
<organism>
    <name type="scientific">Methylibium petroleiphilum (strain ATCC BAA-1232 / LMG 22953 / PM1)</name>
    <dbReference type="NCBI Taxonomy" id="420662"/>
    <lineage>
        <taxon>Bacteria</taxon>
        <taxon>Pseudomonadati</taxon>
        <taxon>Pseudomonadota</taxon>
        <taxon>Betaproteobacteria</taxon>
        <taxon>Burkholderiales</taxon>
        <taxon>Sphaerotilaceae</taxon>
        <taxon>Methylibium</taxon>
    </lineage>
</organism>
<sequence>MKHAVKHIHFVGIGGAGMSGIAEILHNLGYRVSGSDQSDGATTRRLASLGIRVAIGHDAAHIAGAEAVVTSTAVKGDNPEVIAARSRRVPVVPRAVMLAELMRLKQGIAIAGTHGKTTTTSLVASVLAEAGLDPTFVIGGRLNSAGANSRLGAGDYIVVEADESDASFLNLLPVLSVVTNIDADHMDTYGHDLGRLKHAFLEFLHRMPFYGAAIICGDDPGVRSIIPMISRPVVSYGFGEDAQIRAVDVLALPGGQMRFTAQRRNGVVMPDLPITLNLPGRHNVLNALAVIAVAAELELPDAPVQKALAAFDGVGRRFQRYGELPTPAGGRFTLIDDYGHHPVEMAAVIAAARGAFPGRRLVIAFQPHRYTRTRDCFEDFVKVMGGADAVLLGEVYAAGEAPIVAADGRALARALRVGGKLEPVFVDEIAAMPQAIADNVQDGDVVITMGAGSIGAVPGQVVELLGAHA</sequence>
<reference key="1">
    <citation type="journal article" date="2007" name="J. Bacteriol.">
        <title>Whole-genome analysis of the methyl tert-butyl ether-degrading beta-proteobacterium Methylibium petroleiphilum PM1.</title>
        <authorList>
            <person name="Kane S.R."/>
            <person name="Chakicherla A.Y."/>
            <person name="Chain P.S.G."/>
            <person name="Schmidt R."/>
            <person name="Shin M.W."/>
            <person name="Legler T.C."/>
            <person name="Scow K.M."/>
            <person name="Larimer F.W."/>
            <person name="Lucas S.M."/>
            <person name="Richardson P.M."/>
            <person name="Hristova K.R."/>
        </authorList>
    </citation>
    <scope>NUCLEOTIDE SEQUENCE [LARGE SCALE GENOMIC DNA]</scope>
    <source>
        <strain>ATCC BAA-1232 / LMG 22953 / PM1</strain>
    </source>
</reference>